<evidence type="ECO:0000250" key="1"/>
<evidence type="ECO:0000255" key="2"/>
<evidence type="ECO:0000256" key="3">
    <source>
        <dbReference type="SAM" id="MobiDB-lite"/>
    </source>
</evidence>
<evidence type="ECO:0000305" key="4"/>
<accession>Q873N0</accession>
<accession>J9VWF9</accession>
<name>GWT1_CRYNH</name>
<protein>
    <recommendedName>
        <fullName>GPI-anchored wall transfer protein 1</fullName>
        <ecNumber>2.3.-.-</ecNumber>
    </recommendedName>
</protein>
<keyword id="KW-0012">Acyltransferase</keyword>
<keyword id="KW-0256">Endoplasmic reticulum</keyword>
<keyword id="KW-0325">Glycoprotein</keyword>
<keyword id="KW-0337">GPI-anchor biosynthesis</keyword>
<keyword id="KW-0472">Membrane</keyword>
<keyword id="KW-0808">Transferase</keyword>
<keyword id="KW-0812">Transmembrane</keyword>
<keyword id="KW-1133">Transmembrane helix</keyword>
<dbReference type="EC" id="2.3.-.-"/>
<dbReference type="EMBL" id="AB092505">
    <property type="protein sequence ID" value="BAC66176.1"/>
    <property type="molecule type" value="Genomic_DNA"/>
</dbReference>
<dbReference type="EMBL" id="CP003828">
    <property type="protein sequence ID" value="AFR96919.1"/>
    <property type="molecule type" value="Genomic_DNA"/>
</dbReference>
<dbReference type="RefSeq" id="XP_012051648.1">
    <property type="nucleotide sequence ID" value="XM_012196258.1"/>
</dbReference>
<dbReference type="SMR" id="Q873N0"/>
<dbReference type="GlyCosmos" id="Q873N0">
    <property type="glycosylation" value="1 site, No reported glycans"/>
</dbReference>
<dbReference type="GeneID" id="23887626"/>
<dbReference type="KEGG" id="cng:CNAG_04187"/>
<dbReference type="VEuPathDB" id="FungiDB:CNAG_04187"/>
<dbReference type="HOGENOM" id="CLU_020802_1_0_1"/>
<dbReference type="OrthoDB" id="8088at5206"/>
<dbReference type="UniPathway" id="UPA00196"/>
<dbReference type="Proteomes" id="UP000010091">
    <property type="component" value="Chromosome 9"/>
</dbReference>
<dbReference type="GO" id="GO:0005789">
    <property type="term" value="C:endoplasmic reticulum membrane"/>
    <property type="evidence" value="ECO:0007669"/>
    <property type="project" value="UniProtKB-SubCell"/>
</dbReference>
<dbReference type="GO" id="GO:0032216">
    <property type="term" value="F:glucosaminyl-phosphatidylinositol O-acyltransferase activity"/>
    <property type="evidence" value="ECO:0007669"/>
    <property type="project" value="TreeGrafter"/>
</dbReference>
<dbReference type="GO" id="GO:0006506">
    <property type="term" value="P:GPI anchor biosynthetic process"/>
    <property type="evidence" value="ECO:0007669"/>
    <property type="project" value="UniProtKB-UniPathway"/>
</dbReference>
<dbReference type="GO" id="GO:0072659">
    <property type="term" value="P:protein localization to plasma membrane"/>
    <property type="evidence" value="ECO:0007669"/>
    <property type="project" value="TreeGrafter"/>
</dbReference>
<dbReference type="InterPro" id="IPR009447">
    <property type="entry name" value="PIGW/GWT1"/>
</dbReference>
<dbReference type="PANTHER" id="PTHR20661">
    <property type="entry name" value="PHOSPHATIDYLINOSITOL-GLYCAN BIOSYNTHESIS CLASS W PROTEIN"/>
    <property type="match status" value="1"/>
</dbReference>
<dbReference type="PANTHER" id="PTHR20661:SF0">
    <property type="entry name" value="PHOSPHATIDYLINOSITOL-GLYCAN BIOSYNTHESIS CLASS W PROTEIN"/>
    <property type="match status" value="1"/>
</dbReference>
<dbReference type="Pfam" id="PF06423">
    <property type="entry name" value="GWT1"/>
    <property type="match status" value="2"/>
</dbReference>
<comment type="function">
    <text evidence="1">Probable acetyltransferase, which acetylates the inositol ring of phosphatidylinositol during biosynthesis of GPI-anchor.</text>
</comment>
<comment type="pathway">
    <text>Glycolipid biosynthesis; glycosylphosphatidylinositol-anchor biosynthesis.</text>
</comment>
<comment type="subcellular location">
    <subcellularLocation>
        <location evidence="1">Endoplasmic reticulum membrane</location>
        <topology evidence="1">Multi-pass membrane protein</topology>
    </subcellularLocation>
</comment>
<comment type="similarity">
    <text evidence="4">Belongs to the PIGW family.</text>
</comment>
<proteinExistence type="inferred from homology"/>
<sequence length="598" mass="65657">MGDYKSAKEAFVSDNPGASIWSINAVSLVALATYALWIALSPYIRHGLLNNYLICVLPLLFGVTIFSTSPLVFTSFLSIISLAFITKSQKCFKSVSSPEKPKGQWLDESDSDEEPAEPASAAGSAAVSPVKLLPSQVAFASGSLLSPDPTTSPMSPSSSSASGHEDPLGIMGVNRRRSLLEGVSLDVPSHIDSKVRISPVPYLRLKKSRATKAQWVKEKGRLPFLTVYRAHMMLMTVICILAVDFEVFPRWQGKCEDFGTSLMDVGVGSFVFSLGLVSTKSLSPPPPTPTPSSPALNSHIIPLTPSPFTSILISLRKSIPILVLGFIRLIMVKGSDYPEHVTEYGVHWNFFFTLALVPVLAVGIRPLTQWLRWSVLGVIISLLHQLWLTYYLQSIVFSFGRSGIFLANKEGFSSLPGYLSIFLIGLSIGDHVLRLSLPPRRERVVSETNEEHEQSHFERKKLDLIMELIGYSLGWWALLGGWIWAGGEVSRRLANAPYVFWVAAYNTTFLLGYLLLTHIIPSPTSSQTSPSILVPPLLDAMNKNGLAIFLAANLLTGLVNVSMKTMYAPAWLSMGVLMLYTLTISCVGWILKGRRIKI</sequence>
<organism>
    <name type="scientific">Cryptococcus neoformans var. grubii serotype A (strain H99 / ATCC 208821 / CBS 10515 / FGSC 9487)</name>
    <name type="common">Filobasidiella neoformans var. grubii</name>
    <dbReference type="NCBI Taxonomy" id="235443"/>
    <lineage>
        <taxon>Eukaryota</taxon>
        <taxon>Fungi</taxon>
        <taxon>Dikarya</taxon>
        <taxon>Basidiomycota</taxon>
        <taxon>Agaricomycotina</taxon>
        <taxon>Tremellomycetes</taxon>
        <taxon>Tremellales</taxon>
        <taxon>Cryptococcaceae</taxon>
        <taxon>Cryptococcus</taxon>
        <taxon>Cryptococcus neoformans species complex</taxon>
    </lineage>
</organism>
<gene>
    <name type="primary">GWT1</name>
    <name type="ORF">CNAG_04187</name>
</gene>
<reference key="1">
    <citation type="journal article" date="2003" name="J. Biol. Chem.">
        <title>GWT1 gene is required for inositol acylation of glycosylphosphatidylinositol anchors in yeast.</title>
        <authorList>
            <person name="Umemura M."/>
            <person name="Okamoto M."/>
            <person name="Nakayama K."/>
            <person name="Sagane K."/>
            <person name="Tsukahara K."/>
            <person name="Hata K."/>
            <person name="Jigami Y."/>
        </authorList>
    </citation>
    <scope>NUCLEOTIDE SEQUENCE [GENOMIC DNA / MRNA]</scope>
</reference>
<reference key="2">
    <citation type="journal article" date="2014" name="PLoS Genet.">
        <title>Analysis of the genome and transcriptome of Cryptococcus neoformans var. grubii reveals complex RNA expression and microevolution leading to virulence attenuation.</title>
        <authorList>
            <person name="Janbon G."/>
            <person name="Ormerod K.L."/>
            <person name="Paulet D."/>
            <person name="Byrnes E.J. III"/>
            <person name="Yadav V."/>
            <person name="Chatterjee G."/>
            <person name="Mullapudi N."/>
            <person name="Hon C.-C."/>
            <person name="Billmyre R.B."/>
            <person name="Brunel F."/>
            <person name="Bahn Y.-S."/>
            <person name="Chen W."/>
            <person name="Chen Y."/>
            <person name="Chow E.W.L."/>
            <person name="Coppee J.-Y."/>
            <person name="Floyd-Averette A."/>
            <person name="Gaillardin C."/>
            <person name="Gerik K.J."/>
            <person name="Goldberg J."/>
            <person name="Gonzalez-Hilarion S."/>
            <person name="Gujja S."/>
            <person name="Hamlin J.L."/>
            <person name="Hsueh Y.-P."/>
            <person name="Ianiri G."/>
            <person name="Jones S."/>
            <person name="Kodira C.D."/>
            <person name="Kozubowski L."/>
            <person name="Lam W."/>
            <person name="Marra M."/>
            <person name="Mesner L.D."/>
            <person name="Mieczkowski P.A."/>
            <person name="Moyrand F."/>
            <person name="Nielsen K."/>
            <person name="Proux C."/>
            <person name="Rossignol T."/>
            <person name="Schein J.E."/>
            <person name="Sun S."/>
            <person name="Wollschlaeger C."/>
            <person name="Wood I.A."/>
            <person name="Zeng Q."/>
            <person name="Neuveglise C."/>
            <person name="Newlon C.S."/>
            <person name="Perfect J.R."/>
            <person name="Lodge J.K."/>
            <person name="Idnurm A."/>
            <person name="Stajich J.E."/>
            <person name="Kronstad J.W."/>
            <person name="Sanyal K."/>
            <person name="Heitman J."/>
            <person name="Fraser J.A."/>
            <person name="Cuomo C.A."/>
            <person name="Dietrich F.S."/>
        </authorList>
    </citation>
    <scope>NUCLEOTIDE SEQUENCE [LARGE SCALE GENOMIC DNA]</scope>
    <source>
        <strain>H99 / ATCC 208821 / CBS 10515 / FGSC 9487</strain>
    </source>
</reference>
<feature type="chain" id="PRO_0000215186" description="GPI-anchored wall transfer protein 1">
    <location>
        <begin position="1"/>
        <end position="598"/>
    </location>
</feature>
<feature type="transmembrane region" description="Helical" evidence="2">
    <location>
        <begin position="20"/>
        <end position="40"/>
    </location>
</feature>
<feature type="transmembrane region" description="Helical" evidence="2">
    <location>
        <begin position="53"/>
        <end position="73"/>
    </location>
</feature>
<feature type="transmembrane region" description="Helical" evidence="2">
    <location>
        <begin position="223"/>
        <end position="243"/>
    </location>
</feature>
<feature type="transmembrane region" description="Helical" evidence="2">
    <location>
        <begin position="258"/>
        <end position="278"/>
    </location>
</feature>
<feature type="transmembrane region" description="Helical" evidence="2">
    <location>
        <begin position="307"/>
        <end position="327"/>
    </location>
</feature>
<feature type="transmembrane region" description="Helical" evidence="2">
    <location>
        <begin position="344"/>
        <end position="364"/>
    </location>
</feature>
<feature type="transmembrane region" description="Helical" evidence="2">
    <location>
        <begin position="377"/>
        <end position="397"/>
    </location>
</feature>
<feature type="transmembrane region" description="Helical" evidence="2">
    <location>
        <begin position="412"/>
        <end position="432"/>
    </location>
</feature>
<feature type="transmembrane region" description="Helical" evidence="2">
    <location>
        <begin position="464"/>
        <end position="484"/>
    </location>
</feature>
<feature type="transmembrane region" description="Helical" evidence="2">
    <location>
        <begin position="500"/>
        <end position="520"/>
    </location>
</feature>
<feature type="transmembrane region" description="Helical" evidence="2">
    <location>
        <begin position="571"/>
        <end position="591"/>
    </location>
</feature>
<feature type="region of interest" description="Disordered" evidence="3">
    <location>
        <begin position="94"/>
        <end position="127"/>
    </location>
</feature>
<feature type="region of interest" description="Disordered" evidence="3">
    <location>
        <begin position="144"/>
        <end position="167"/>
    </location>
</feature>
<feature type="compositionally biased region" description="Acidic residues" evidence="3">
    <location>
        <begin position="107"/>
        <end position="116"/>
    </location>
</feature>
<feature type="compositionally biased region" description="Low complexity" evidence="3">
    <location>
        <begin position="117"/>
        <end position="127"/>
    </location>
</feature>
<feature type="compositionally biased region" description="Low complexity" evidence="3">
    <location>
        <begin position="144"/>
        <end position="162"/>
    </location>
</feature>
<feature type="glycosylation site" description="N-linked (GlcNAc...) asparagine" evidence="2">
    <location>
        <position position="560"/>
    </location>
</feature>